<accession>Q3T063</accession>
<dbReference type="EC" id="2.4.2.19"/>
<dbReference type="EMBL" id="BC102550">
    <property type="protein sequence ID" value="AAI02551.1"/>
    <property type="molecule type" value="mRNA"/>
</dbReference>
<dbReference type="RefSeq" id="NP_001030523.1">
    <property type="nucleotide sequence ID" value="NM_001035446.2"/>
</dbReference>
<dbReference type="SMR" id="Q3T063"/>
<dbReference type="FunCoup" id="Q3T063">
    <property type="interactions" value="623"/>
</dbReference>
<dbReference type="STRING" id="9913.ENSBTAP00000062942"/>
<dbReference type="PaxDb" id="9913-ENSBTAP00000024072"/>
<dbReference type="PeptideAtlas" id="Q3T063"/>
<dbReference type="GeneID" id="614254"/>
<dbReference type="KEGG" id="bta:614254"/>
<dbReference type="CTD" id="23475"/>
<dbReference type="eggNOG" id="KOG3008">
    <property type="taxonomic scope" value="Eukaryota"/>
</dbReference>
<dbReference type="InParanoid" id="Q3T063"/>
<dbReference type="OrthoDB" id="10067394at2759"/>
<dbReference type="UniPathway" id="UPA00253">
    <property type="reaction ID" value="UER00331"/>
</dbReference>
<dbReference type="Proteomes" id="UP000009136">
    <property type="component" value="Unplaced"/>
</dbReference>
<dbReference type="GO" id="GO:0005737">
    <property type="term" value="C:cytoplasm"/>
    <property type="evidence" value="ECO:0000318"/>
    <property type="project" value="GO_Central"/>
</dbReference>
<dbReference type="GO" id="GO:0004514">
    <property type="term" value="F:nicotinate-nucleotide diphosphorylase (carboxylating) activity"/>
    <property type="evidence" value="ECO:0000318"/>
    <property type="project" value="GO_Central"/>
</dbReference>
<dbReference type="GO" id="GO:0009435">
    <property type="term" value="P:NAD biosynthetic process"/>
    <property type="evidence" value="ECO:0000318"/>
    <property type="project" value="GO_Central"/>
</dbReference>
<dbReference type="GO" id="GO:0034213">
    <property type="term" value="P:quinolinate catabolic process"/>
    <property type="evidence" value="ECO:0000318"/>
    <property type="project" value="GO_Central"/>
</dbReference>
<dbReference type="CDD" id="cd01572">
    <property type="entry name" value="QPRTase"/>
    <property type="match status" value="1"/>
</dbReference>
<dbReference type="FunFam" id="3.20.20.70:FF:000090">
    <property type="entry name" value="Nicotinate-nucleotide pyrophosphorylase [carboxylating]"/>
    <property type="match status" value="1"/>
</dbReference>
<dbReference type="FunFam" id="3.90.1170.20:FF:000004">
    <property type="entry name" value="Nicotinate-nucleotide pyrophosphorylase [carboxylating]"/>
    <property type="match status" value="1"/>
</dbReference>
<dbReference type="Gene3D" id="3.20.20.70">
    <property type="entry name" value="Aldolase class I"/>
    <property type="match status" value="1"/>
</dbReference>
<dbReference type="Gene3D" id="3.90.1170.20">
    <property type="entry name" value="Quinolinate phosphoribosyl transferase, N-terminal domain"/>
    <property type="match status" value="1"/>
</dbReference>
<dbReference type="InterPro" id="IPR013785">
    <property type="entry name" value="Aldolase_TIM"/>
</dbReference>
<dbReference type="InterPro" id="IPR004393">
    <property type="entry name" value="NadC"/>
</dbReference>
<dbReference type="InterPro" id="IPR027277">
    <property type="entry name" value="NadC/ModD"/>
</dbReference>
<dbReference type="InterPro" id="IPR036068">
    <property type="entry name" value="Nicotinate_pribotase-like_C"/>
</dbReference>
<dbReference type="InterPro" id="IPR037128">
    <property type="entry name" value="Quinolinate_PRibosylTase_N_sf"/>
</dbReference>
<dbReference type="InterPro" id="IPR002638">
    <property type="entry name" value="Quinolinate_PRibosylTrfase_C"/>
</dbReference>
<dbReference type="InterPro" id="IPR022412">
    <property type="entry name" value="Quinolinate_PRibosylTrfase_N"/>
</dbReference>
<dbReference type="NCBIfam" id="TIGR00078">
    <property type="entry name" value="nadC"/>
    <property type="match status" value="1"/>
</dbReference>
<dbReference type="PANTHER" id="PTHR32179">
    <property type="entry name" value="NICOTINATE-NUCLEOTIDE PYROPHOSPHORYLASE [CARBOXYLATING]"/>
    <property type="match status" value="1"/>
</dbReference>
<dbReference type="PANTHER" id="PTHR32179:SF3">
    <property type="entry name" value="NICOTINATE-NUCLEOTIDE PYROPHOSPHORYLASE [CARBOXYLATING]"/>
    <property type="match status" value="1"/>
</dbReference>
<dbReference type="Pfam" id="PF01729">
    <property type="entry name" value="QRPTase_C"/>
    <property type="match status" value="1"/>
</dbReference>
<dbReference type="Pfam" id="PF02749">
    <property type="entry name" value="QRPTase_N"/>
    <property type="match status" value="1"/>
</dbReference>
<dbReference type="PIRSF" id="PIRSF006250">
    <property type="entry name" value="NadC_ModD"/>
    <property type="match status" value="1"/>
</dbReference>
<dbReference type="SUPFAM" id="SSF51690">
    <property type="entry name" value="Nicotinate/Quinolinate PRTase C-terminal domain-like"/>
    <property type="match status" value="1"/>
</dbReference>
<dbReference type="SUPFAM" id="SSF54675">
    <property type="entry name" value="Nicotinate/Quinolinate PRTase N-terminal domain-like"/>
    <property type="match status" value="1"/>
</dbReference>
<gene>
    <name type="primary">QPRT</name>
</gene>
<protein>
    <recommendedName>
        <fullName>Nicotinate-nucleotide pyrophosphorylase [carboxylating]</fullName>
        <ecNumber>2.4.2.19</ecNumber>
    </recommendedName>
    <alternativeName>
        <fullName>Quinolinate phosphoribosyltransferase [decarboxylating]</fullName>
        <shortName>QAPRTase</shortName>
        <shortName>QPRTase</shortName>
    </alternativeName>
</protein>
<proteinExistence type="evidence at transcript level"/>
<reference key="1">
    <citation type="submission" date="2005-08" db="EMBL/GenBank/DDBJ databases">
        <authorList>
            <consortium name="NIH - Mammalian Gene Collection (MGC) project"/>
        </authorList>
    </citation>
    <scope>NUCLEOTIDE SEQUENCE [LARGE SCALE MRNA]</scope>
    <source>
        <strain>Crossbred X Angus</strain>
        <tissue>Liver</tissue>
    </source>
</reference>
<feature type="chain" id="PRO_0000245463" description="Nicotinate-nucleotide pyrophosphorylase [carboxylating]">
    <location>
        <begin position="1"/>
        <end position="299"/>
    </location>
</feature>
<feature type="region of interest" description="Important for hexamer formation" evidence="1">
    <location>
        <begin position="8"/>
        <end position="12"/>
    </location>
</feature>
<feature type="binding site" evidence="1">
    <location>
        <position position="102"/>
    </location>
    <ligand>
        <name>quinolinate</name>
        <dbReference type="ChEBI" id="CHEBI:29959"/>
    </ligand>
</feature>
<feature type="binding site" evidence="1">
    <location>
        <begin position="138"/>
        <end position="139"/>
    </location>
    <ligand>
        <name>quinolinate</name>
        <dbReference type="ChEBI" id="CHEBI:29959"/>
    </ligand>
</feature>
<feature type="binding site" evidence="1">
    <location>
        <begin position="160"/>
        <end position="161"/>
    </location>
    <ligand>
        <name>quinolinate</name>
        <dbReference type="ChEBI" id="CHEBI:29959"/>
    </ligand>
</feature>
<feature type="binding site" evidence="1">
    <location>
        <position position="171"/>
    </location>
    <ligand>
        <name>quinolinate</name>
        <dbReference type="ChEBI" id="CHEBI:29959"/>
    </ligand>
</feature>
<feature type="binding site" evidence="1">
    <location>
        <position position="201"/>
    </location>
    <ligand>
        <name>quinolinate</name>
        <dbReference type="ChEBI" id="CHEBI:29959"/>
    </ligand>
</feature>
<feature type="binding site" evidence="1">
    <location>
        <position position="222"/>
    </location>
    <ligand>
        <name>quinolinate</name>
        <dbReference type="ChEBI" id="CHEBI:29959"/>
    </ligand>
</feature>
<feature type="binding site" evidence="1">
    <location>
        <begin position="248"/>
        <end position="250"/>
    </location>
    <ligand>
        <name>quinolinate</name>
        <dbReference type="ChEBI" id="CHEBI:29959"/>
    </ligand>
</feature>
<feature type="binding site" evidence="1">
    <location>
        <position position="270"/>
    </location>
    <ligand>
        <name>quinolinate</name>
        <dbReference type="ChEBI" id="CHEBI:29959"/>
    </ligand>
</feature>
<feature type="modified residue" description="Phosphothreonine" evidence="2">
    <location>
        <position position="291"/>
    </location>
</feature>
<evidence type="ECO:0000250" key="1">
    <source>
        <dbReference type="UniProtKB" id="Q15274"/>
    </source>
</evidence>
<evidence type="ECO:0000250" key="2">
    <source>
        <dbReference type="UniProtKB" id="Q91X91"/>
    </source>
</evidence>
<evidence type="ECO:0000305" key="3"/>
<comment type="function">
    <text evidence="1">Involved in the catabolism of quinolinic acid (QA).</text>
</comment>
<comment type="catalytic activity">
    <reaction evidence="1">
        <text>nicotinate beta-D-ribonucleotide + CO2 + diphosphate = quinolinate + 5-phospho-alpha-D-ribose 1-diphosphate + 2 H(+)</text>
        <dbReference type="Rhea" id="RHEA:12733"/>
        <dbReference type="ChEBI" id="CHEBI:15378"/>
        <dbReference type="ChEBI" id="CHEBI:16526"/>
        <dbReference type="ChEBI" id="CHEBI:29959"/>
        <dbReference type="ChEBI" id="CHEBI:33019"/>
        <dbReference type="ChEBI" id="CHEBI:57502"/>
        <dbReference type="ChEBI" id="CHEBI:58017"/>
        <dbReference type="EC" id="2.4.2.19"/>
    </reaction>
</comment>
<comment type="pathway">
    <text evidence="1">Cofactor biosynthesis; NAD(+) biosynthesis; nicotinate D-ribonucleotide from quinolinate: step 1/1.</text>
</comment>
<comment type="subunit">
    <text evidence="1">Hexamer formed by 3 homodimers.</text>
</comment>
<comment type="similarity">
    <text evidence="3">Belongs to the NadC/ModD family.</text>
</comment>
<name>NADC_BOVIN</name>
<organism>
    <name type="scientific">Bos taurus</name>
    <name type="common">Bovine</name>
    <dbReference type="NCBI Taxonomy" id="9913"/>
    <lineage>
        <taxon>Eukaryota</taxon>
        <taxon>Metazoa</taxon>
        <taxon>Chordata</taxon>
        <taxon>Craniata</taxon>
        <taxon>Vertebrata</taxon>
        <taxon>Euteleostomi</taxon>
        <taxon>Mammalia</taxon>
        <taxon>Eutheria</taxon>
        <taxon>Laurasiatheria</taxon>
        <taxon>Artiodactyla</taxon>
        <taxon>Ruminantia</taxon>
        <taxon>Pecora</taxon>
        <taxon>Bovidae</taxon>
        <taxon>Bovinae</taxon>
        <taxon>Bos</taxon>
    </lineage>
</organism>
<sequence>MDPEGLAHLLPPATLAALADSWLREDCPGLNYVALVSGTAPSQAVLWAKSPGVLAGRPFLDAIFAQVNCQVSWFLPEGSKLVPVAKVAEVRGPAHCLLLGERVALNTLARCSGVASMAAAAVETARGTGWAGHVAGTRKTTPGFRLVEKYGLLVGGAAAHRYDLGGLVMVKDNHVMAAGGVKKAVRAARRAADFALKVEVECSSLQEAVEAAEAGADLVLLDNFRPEELHPTAATLKAQFPSVSVEASGGVRLDNLPQFCGPHIDVISLGMLTQAAPALDFSLKLFAEGATPVPHARRS</sequence>
<keyword id="KW-0328">Glycosyltransferase</keyword>
<keyword id="KW-0597">Phosphoprotein</keyword>
<keyword id="KW-0662">Pyridine nucleotide biosynthesis</keyword>
<keyword id="KW-1185">Reference proteome</keyword>
<keyword id="KW-0808">Transferase</keyword>